<comment type="function">
    <text evidence="1">The UvrABC repair system catalyzes the recognition and processing of DNA lesions. A damage recognition complex composed of 2 UvrA and 2 UvrB subunits scans DNA for abnormalities. Upon binding of the UvrA(2)B(2) complex to a putative damaged site, the DNA wraps around one UvrB monomer. DNA wrap is dependent on ATP binding by UvrB and probably causes local melting of the DNA helix, facilitating insertion of UvrB beta-hairpin between the DNA strands. Then UvrB probes one DNA strand for the presence of a lesion. If a lesion is found the UvrA subunits dissociate and the UvrB-DNA preincision complex is formed. This complex is subsequently bound by UvrC and the second UvrB is released. If no lesion is found, the DNA wraps around the other UvrB subunit that will check the other stand for damage.</text>
</comment>
<comment type="subunit">
    <text evidence="1">Forms a heterotetramer with UvrA during the search for lesions. Interacts with UvrC in an incision complex.</text>
</comment>
<comment type="subcellular location">
    <subcellularLocation>
        <location evidence="1">Cytoplasm</location>
    </subcellularLocation>
</comment>
<comment type="domain">
    <text evidence="1">The beta-hairpin motif is involved in DNA binding.</text>
</comment>
<comment type="similarity">
    <text evidence="1">Belongs to the UvrB family.</text>
</comment>
<keyword id="KW-0067">ATP-binding</keyword>
<keyword id="KW-0963">Cytoplasm</keyword>
<keyword id="KW-0227">DNA damage</keyword>
<keyword id="KW-0228">DNA excision</keyword>
<keyword id="KW-0234">DNA repair</keyword>
<keyword id="KW-0267">Excision nuclease</keyword>
<keyword id="KW-0347">Helicase</keyword>
<keyword id="KW-0378">Hydrolase</keyword>
<keyword id="KW-0547">Nucleotide-binding</keyword>
<keyword id="KW-0742">SOS response</keyword>
<accession>B3EMK1</accession>
<evidence type="ECO:0000255" key="1">
    <source>
        <dbReference type="HAMAP-Rule" id="MF_00204"/>
    </source>
</evidence>
<protein>
    <recommendedName>
        <fullName evidence="1">UvrABC system protein B</fullName>
        <shortName evidence="1">Protein UvrB</shortName>
    </recommendedName>
    <alternativeName>
        <fullName evidence="1">Excinuclease ABC subunit B</fullName>
    </alternativeName>
</protein>
<feature type="chain" id="PRO_1000200534" description="UvrABC system protein B">
    <location>
        <begin position="1"/>
        <end position="690"/>
    </location>
</feature>
<feature type="domain" description="Helicase ATP-binding" evidence="1">
    <location>
        <begin position="30"/>
        <end position="188"/>
    </location>
</feature>
<feature type="domain" description="Helicase C-terminal" evidence="1">
    <location>
        <begin position="435"/>
        <end position="601"/>
    </location>
</feature>
<feature type="domain" description="UVR" evidence="1">
    <location>
        <begin position="641"/>
        <end position="676"/>
    </location>
</feature>
<feature type="short sequence motif" description="Beta-hairpin">
    <location>
        <begin position="96"/>
        <end position="119"/>
    </location>
</feature>
<feature type="binding site" evidence="1">
    <location>
        <begin position="43"/>
        <end position="50"/>
    </location>
    <ligand>
        <name>ATP</name>
        <dbReference type="ChEBI" id="CHEBI:30616"/>
    </ligand>
</feature>
<gene>
    <name evidence="1" type="primary">uvrB</name>
    <name type="ordered locus">Cphamn1_2030</name>
</gene>
<organism>
    <name type="scientific">Chlorobium phaeobacteroides (strain BS1)</name>
    <dbReference type="NCBI Taxonomy" id="331678"/>
    <lineage>
        <taxon>Bacteria</taxon>
        <taxon>Pseudomonadati</taxon>
        <taxon>Chlorobiota</taxon>
        <taxon>Chlorobiia</taxon>
        <taxon>Chlorobiales</taxon>
        <taxon>Chlorobiaceae</taxon>
        <taxon>Chlorobium/Pelodictyon group</taxon>
        <taxon>Chlorobium</taxon>
    </lineage>
</organism>
<proteinExistence type="inferred from homology"/>
<dbReference type="EMBL" id="CP001101">
    <property type="protein sequence ID" value="ACE04940.1"/>
    <property type="molecule type" value="Genomic_DNA"/>
</dbReference>
<dbReference type="SMR" id="B3EMK1"/>
<dbReference type="STRING" id="331678.Cphamn1_2030"/>
<dbReference type="KEGG" id="cpb:Cphamn1_2030"/>
<dbReference type="eggNOG" id="COG0556">
    <property type="taxonomic scope" value="Bacteria"/>
</dbReference>
<dbReference type="HOGENOM" id="CLU_009621_2_1_10"/>
<dbReference type="OrthoDB" id="9806651at2"/>
<dbReference type="GO" id="GO:0005737">
    <property type="term" value="C:cytoplasm"/>
    <property type="evidence" value="ECO:0007669"/>
    <property type="project" value="UniProtKB-SubCell"/>
</dbReference>
<dbReference type="GO" id="GO:0009380">
    <property type="term" value="C:excinuclease repair complex"/>
    <property type="evidence" value="ECO:0007669"/>
    <property type="project" value="InterPro"/>
</dbReference>
<dbReference type="GO" id="GO:0005524">
    <property type="term" value="F:ATP binding"/>
    <property type="evidence" value="ECO:0007669"/>
    <property type="project" value="UniProtKB-UniRule"/>
</dbReference>
<dbReference type="GO" id="GO:0016887">
    <property type="term" value="F:ATP hydrolysis activity"/>
    <property type="evidence" value="ECO:0007669"/>
    <property type="project" value="InterPro"/>
</dbReference>
<dbReference type="GO" id="GO:0003677">
    <property type="term" value="F:DNA binding"/>
    <property type="evidence" value="ECO:0007669"/>
    <property type="project" value="UniProtKB-UniRule"/>
</dbReference>
<dbReference type="GO" id="GO:0009381">
    <property type="term" value="F:excinuclease ABC activity"/>
    <property type="evidence" value="ECO:0007669"/>
    <property type="project" value="UniProtKB-UniRule"/>
</dbReference>
<dbReference type="GO" id="GO:0004386">
    <property type="term" value="F:helicase activity"/>
    <property type="evidence" value="ECO:0007669"/>
    <property type="project" value="UniProtKB-KW"/>
</dbReference>
<dbReference type="GO" id="GO:0006289">
    <property type="term" value="P:nucleotide-excision repair"/>
    <property type="evidence" value="ECO:0007669"/>
    <property type="project" value="UniProtKB-UniRule"/>
</dbReference>
<dbReference type="GO" id="GO:0009432">
    <property type="term" value="P:SOS response"/>
    <property type="evidence" value="ECO:0007669"/>
    <property type="project" value="UniProtKB-UniRule"/>
</dbReference>
<dbReference type="CDD" id="cd17916">
    <property type="entry name" value="DEXHc_UvrB"/>
    <property type="match status" value="1"/>
</dbReference>
<dbReference type="CDD" id="cd18790">
    <property type="entry name" value="SF2_C_UvrB"/>
    <property type="match status" value="1"/>
</dbReference>
<dbReference type="Gene3D" id="3.40.50.300">
    <property type="entry name" value="P-loop containing nucleotide triphosphate hydrolases"/>
    <property type="match status" value="3"/>
</dbReference>
<dbReference type="Gene3D" id="4.10.860.10">
    <property type="entry name" value="UVR domain"/>
    <property type="match status" value="1"/>
</dbReference>
<dbReference type="HAMAP" id="MF_00204">
    <property type="entry name" value="UvrB"/>
    <property type="match status" value="1"/>
</dbReference>
<dbReference type="InterPro" id="IPR006935">
    <property type="entry name" value="Helicase/UvrB_N"/>
</dbReference>
<dbReference type="InterPro" id="IPR014001">
    <property type="entry name" value="Helicase_ATP-bd"/>
</dbReference>
<dbReference type="InterPro" id="IPR001650">
    <property type="entry name" value="Helicase_C-like"/>
</dbReference>
<dbReference type="InterPro" id="IPR027417">
    <property type="entry name" value="P-loop_NTPase"/>
</dbReference>
<dbReference type="InterPro" id="IPR001943">
    <property type="entry name" value="UVR_dom"/>
</dbReference>
<dbReference type="InterPro" id="IPR036876">
    <property type="entry name" value="UVR_dom_sf"/>
</dbReference>
<dbReference type="InterPro" id="IPR004807">
    <property type="entry name" value="UvrB"/>
</dbReference>
<dbReference type="InterPro" id="IPR041471">
    <property type="entry name" value="UvrB_inter"/>
</dbReference>
<dbReference type="InterPro" id="IPR024759">
    <property type="entry name" value="UvrB_YAD/RRR_dom"/>
</dbReference>
<dbReference type="NCBIfam" id="NF003673">
    <property type="entry name" value="PRK05298.1"/>
    <property type="match status" value="1"/>
</dbReference>
<dbReference type="NCBIfam" id="TIGR00631">
    <property type="entry name" value="uvrb"/>
    <property type="match status" value="1"/>
</dbReference>
<dbReference type="PANTHER" id="PTHR24029">
    <property type="entry name" value="UVRABC SYSTEM PROTEIN B"/>
    <property type="match status" value="1"/>
</dbReference>
<dbReference type="PANTHER" id="PTHR24029:SF0">
    <property type="entry name" value="UVRABC SYSTEM PROTEIN B"/>
    <property type="match status" value="1"/>
</dbReference>
<dbReference type="Pfam" id="PF00271">
    <property type="entry name" value="Helicase_C"/>
    <property type="match status" value="1"/>
</dbReference>
<dbReference type="Pfam" id="PF04851">
    <property type="entry name" value="ResIII"/>
    <property type="match status" value="1"/>
</dbReference>
<dbReference type="Pfam" id="PF02151">
    <property type="entry name" value="UVR"/>
    <property type="match status" value="1"/>
</dbReference>
<dbReference type="Pfam" id="PF12344">
    <property type="entry name" value="UvrB"/>
    <property type="match status" value="1"/>
</dbReference>
<dbReference type="Pfam" id="PF17757">
    <property type="entry name" value="UvrB_inter"/>
    <property type="match status" value="1"/>
</dbReference>
<dbReference type="SMART" id="SM00487">
    <property type="entry name" value="DEXDc"/>
    <property type="match status" value="1"/>
</dbReference>
<dbReference type="SMART" id="SM00490">
    <property type="entry name" value="HELICc"/>
    <property type="match status" value="1"/>
</dbReference>
<dbReference type="SUPFAM" id="SSF46600">
    <property type="entry name" value="C-terminal UvrC-binding domain of UvrB"/>
    <property type="match status" value="1"/>
</dbReference>
<dbReference type="SUPFAM" id="SSF52540">
    <property type="entry name" value="P-loop containing nucleoside triphosphate hydrolases"/>
    <property type="match status" value="2"/>
</dbReference>
<dbReference type="PROSITE" id="PS51192">
    <property type="entry name" value="HELICASE_ATP_BIND_1"/>
    <property type="match status" value="1"/>
</dbReference>
<dbReference type="PROSITE" id="PS51194">
    <property type="entry name" value="HELICASE_CTER"/>
    <property type="match status" value="1"/>
</dbReference>
<dbReference type="PROSITE" id="PS50151">
    <property type="entry name" value="UVR"/>
    <property type="match status" value="1"/>
</dbReference>
<name>UVRB_CHLPB</name>
<sequence length="690" mass="79020">MKGKGEQVFRLESSYEPEGDQPQAIEALRQGVMDGQTNQVLLGVTGSGKTFTMANVIAEVNKPVLLISHNKTLAAQLYGELKQFFPHNAVEYFISYYDFYQPEAYIPTMDKYIAKDLKINDEIERLRLKATSSLLSGRKDVIVVSSVSCIYGLGAPEDWKAQIIELRVNMEKERDSFLQELISLHFVRDDSDLAPGKFRVRGDVIDLVPMHEESALRVEFFGDEIERLQLFDHTTGEIFEDEEYAFIYPARQFVAGREKLQQAMLGIEDELAHRLNVFRSGEKFVEARRIEERTRYDLEMIKELGYCSGIENYSRHLSGRKAGERPYCLLDYFPEDYLVIVDESHVTFPQIRGMYAGDRSRKTILVEYGFRLPSALDNRPLRFEEFETMVPQLISVSATPGDYELRRSGGSVVEQLVRPTGLLDPEIVVRPVNGQIDDLLEEIRKHTGKGFKSLVMTLTKRMSEDLHDYLRKAGLRTRYLHSEIKSLERMQILRELRTGEIDILVGVNLLREGLDLPEVSLVAILDADKEGFLRDSKSLMQIAGRAARNVEGMVVFYADRITASMRYVIDETERRRSVQRKFNEDHGVIPASIVKSVDQVLDTTGVADAEDRFRRRRFGLEQRSRRGIEDLVGSLKREDLYAMAEELRLEMQEAAESMEFEKAAYLRDEVTKLEDAAEEKRESEGGMDSG</sequence>
<reference key="1">
    <citation type="submission" date="2008-06" db="EMBL/GenBank/DDBJ databases">
        <title>Complete sequence of Chlorobium phaeobacteroides BS1.</title>
        <authorList>
            <consortium name="US DOE Joint Genome Institute"/>
            <person name="Lucas S."/>
            <person name="Copeland A."/>
            <person name="Lapidus A."/>
            <person name="Glavina del Rio T."/>
            <person name="Dalin E."/>
            <person name="Tice H."/>
            <person name="Bruce D."/>
            <person name="Goodwin L."/>
            <person name="Pitluck S."/>
            <person name="Schmutz J."/>
            <person name="Larimer F."/>
            <person name="Land M."/>
            <person name="Hauser L."/>
            <person name="Kyrpides N."/>
            <person name="Ovchinnikova G."/>
            <person name="Li T."/>
            <person name="Liu Z."/>
            <person name="Zhao F."/>
            <person name="Overmann J."/>
            <person name="Bryant D.A."/>
            <person name="Richardson P."/>
        </authorList>
    </citation>
    <scope>NUCLEOTIDE SEQUENCE [LARGE SCALE GENOMIC DNA]</scope>
    <source>
        <strain>BS1</strain>
    </source>
</reference>